<proteinExistence type="evidence at transcript level"/>
<evidence type="ECO:0000250" key="1"/>
<evidence type="ECO:0000250" key="2">
    <source>
        <dbReference type="UniProtKB" id="A8Q2D1"/>
    </source>
</evidence>
<evidence type="ECO:0000250" key="3">
    <source>
        <dbReference type="UniProtKB" id="P07584"/>
    </source>
</evidence>
<evidence type="ECO:0000255" key="4"/>
<evidence type="ECO:0000255" key="5">
    <source>
        <dbReference type="PROSITE-ProRule" id="PRU01211"/>
    </source>
</evidence>
<evidence type="ECO:0000269" key="6">
    <source>
    </source>
</evidence>
<evidence type="ECO:0000305" key="7"/>
<reference key="1">
    <citation type="journal article" date="1998" name="Science">
        <title>Genome sequence of the nematode C. elegans: a platform for investigating biology.</title>
        <authorList>
            <consortium name="The C. elegans sequencing consortium"/>
        </authorList>
    </citation>
    <scope>NUCLEOTIDE SEQUENCE [LARGE SCALE GENOMIC DNA]</scope>
    <source>
        <strain>Bristol N2</strain>
    </source>
</reference>
<reference key="2">
    <citation type="journal article" date="2003" name="Eur. J. Biochem.">
        <title>The astacin protein family in Caenorhabditis elegans.</title>
        <authorList>
            <person name="Moehrlen F."/>
            <person name="Hutter H."/>
            <person name="Zwilling R."/>
        </authorList>
    </citation>
    <scope>NUCLEOTIDE SEQUENCE [MRNA] OF 133-195</scope>
    <scope>NOMENCLATURE</scope>
    <source>
        <strain>Bristol N2</strain>
    </source>
</reference>
<reference key="3">
    <citation type="journal article" date="2010" name="BMC Dev. Biol.">
        <title>Characterization of the astacin family of metalloproteases in C. elegans.</title>
        <authorList>
            <person name="Park J.O."/>
            <person name="Pan J."/>
            <person name="Moehrlen F."/>
            <person name="Schupp M.O."/>
            <person name="Johnsen R."/>
            <person name="Baillie D.L."/>
            <person name="Zapf R."/>
            <person name="Moerman D.G."/>
            <person name="Hutter H."/>
        </authorList>
    </citation>
    <scope>TISSUE SPECIFICITY</scope>
</reference>
<gene>
    <name type="primary">nas-22</name>
    <name type="ORF">T11F9.6</name>
</gene>
<feature type="signal peptide" evidence="4">
    <location>
        <begin position="1"/>
        <end position="16"/>
    </location>
</feature>
<feature type="propeptide" id="PRO_0000442669" evidence="7">
    <location>
        <begin position="17"/>
        <end status="unknown"/>
    </location>
</feature>
<feature type="chain" id="PRO_0000028926" description="Zinc metalloproteinase nas-22">
    <location>
        <begin status="unknown"/>
        <end position="367"/>
    </location>
</feature>
<feature type="domain" description="Peptidase M12A" evidence="5">
    <location>
        <begin position="41"/>
        <end position="237"/>
    </location>
</feature>
<feature type="domain" description="EGF-like">
    <location>
        <begin position="232"/>
        <end position="270"/>
    </location>
</feature>
<feature type="active site" evidence="5">
    <location>
        <position position="139"/>
    </location>
</feature>
<feature type="binding site" evidence="5">
    <location>
        <position position="138"/>
    </location>
    <ligand>
        <name>Zn(2+)</name>
        <dbReference type="ChEBI" id="CHEBI:29105"/>
        <note>catalytic</note>
    </ligand>
</feature>
<feature type="binding site" evidence="5">
    <location>
        <position position="142"/>
    </location>
    <ligand>
        <name>Zn(2+)</name>
        <dbReference type="ChEBI" id="CHEBI:29105"/>
        <note>catalytic</note>
    </ligand>
</feature>
<feature type="binding site" evidence="5">
    <location>
        <position position="148"/>
    </location>
    <ligand>
        <name>Zn(2+)</name>
        <dbReference type="ChEBI" id="CHEBI:29105"/>
        <note>catalytic</note>
    </ligand>
</feature>
<feature type="glycosylation site" description="N-linked (GlcNAc...) asparagine" evidence="4">
    <location>
        <position position="56"/>
    </location>
</feature>
<feature type="glycosylation site" description="N-linked (GlcNAc...) asparagine" evidence="4">
    <location>
        <position position="85"/>
    </location>
</feature>
<feature type="glycosylation site" description="N-linked (GlcNAc...) asparagine" evidence="4">
    <location>
        <position position="169"/>
    </location>
</feature>
<feature type="glycosylation site" description="N-linked (GlcNAc...) asparagine" evidence="4">
    <location>
        <position position="241"/>
    </location>
</feature>
<feature type="glycosylation site" description="N-linked (GlcNAc...) asparagine" evidence="4">
    <location>
        <position position="254"/>
    </location>
</feature>
<feature type="glycosylation site" description="N-linked (GlcNAc...) asparagine" evidence="4">
    <location>
        <position position="287"/>
    </location>
</feature>
<feature type="glycosylation site" description="N-linked (GlcNAc...) asparagine" evidence="4">
    <location>
        <position position="322"/>
    </location>
</feature>
<feature type="disulfide bond" evidence="5">
    <location>
        <begin position="88"/>
        <end position="236"/>
    </location>
</feature>
<feature type="disulfide bond" evidence="5">
    <location>
        <begin position="111"/>
        <end position="130"/>
    </location>
</feature>
<feature type="disulfide bond" evidence="1">
    <location>
        <begin position="238"/>
        <end position="258"/>
    </location>
</feature>
<feature type="disulfide bond" evidence="1">
    <location>
        <begin position="260"/>
        <end position="269"/>
    </location>
</feature>
<protein>
    <recommendedName>
        <fullName>Zinc metalloproteinase nas-22</fullName>
        <ecNumber evidence="2">3.4.24.-</ecNumber>
    </recommendedName>
    <alternativeName>
        <fullName>Nematode astacin 22</fullName>
    </alternativeName>
</protein>
<comment type="function">
    <text evidence="3">Metalloprotease.</text>
</comment>
<comment type="cofactor">
    <cofactor evidence="5">
        <name>Zn(2+)</name>
        <dbReference type="ChEBI" id="CHEBI:29105"/>
    </cofactor>
    <text evidence="5">Binds 1 zinc ion per subunit.</text>
</comment>
<comment type="subcellular location">
    <subcellularLocation>
        <location evidence="7">Secreted</location>
    </subcellularLocation>
</comment>
<comment type="tissue specificity">
    <text evidence="6">Expressed in uterine seam (utse) cell.</text>
</comment>
<dbReference type="EC" id="3.4.24.-" evidence="2"/>
<dbReference type="EMBL" id="Z74042">
    <property type="protein sequence ID" value="CAA98530.2"/>
    <property type="molecule type" value="Genomic_DNA"/>
</dbReference>
<dbReference type="EMBL" id="AJ561212">
    <property type="protein sequence ID" value="CAE47484.1"/>
    <property type="molecule type" value="mRNA"/>
</dbReference>
<dbReference type="PIR" id="T24838">
    <property type="entry name" value="T24838"/>
</dbReference>
<dbReference type="RefSeq" id="NP_505908.2">
    <property type="nucleotide sequence ID" value="NM_073507.4"/>
</dbReference>
<dbReference type="SMR" id="Q22398"/>
<dbReference type="BioGRID" id="53089">
    <property type="interactions" value="1"/>
</dbReference>
<dbReference type="DIP" id="DIP-26108N"/>
<dbReference type="STRING" id="6239.T11F9.6.1"/>
<dbReference type="MEROPS" id="M12.A43"/>
<dbReference type="GlyCosmos" id="Q22398">
    <property type="glycosylation" value="7 sites, No reported glycans"/>
</dbReference>
<dbReference type="PaxDb" id="6239-T11F9.6"/>
<dbReference type="EnsemblMetazoa" id="T11F9.6.1">
    <property type="protein sequence ID" value="T11F9.6.1"/>
    <property type="gene ID" value="WBGene00003541"/>
</dbReference>
<dbReference type="GeneID" id="188423"/>
<dbReference type="KEGG" id="cel:CELE_T11F9.6"/>
<dbReference type="UCSC" id="T11F9.6">
    <property type="organism name" value="c. elegans"/>
</dbReference>
<dbReference type="AGR" id="WB:WBGene00003541"/>
<dbReference type="CTD" id="188423"/>
<dbReference type="WormBase" id="T11F9.6">
    <property type="protein sequence ID" value="CE44156"/>
    <property type="gene ID" value="WBGene00003541"/>
    <property type="gene designation" value="nas-22"/>
</dbReference>
<dbReference type="eggNOG" id="KOG3714">
    <property type="taxonomic scope" value="Eukaryota"/>
</dbReference>
<dbReference type="GeneTree" id="ENSGT00970000196541"/>
<dbReference type="HOGENOM" id="CLU_017286_1_1_1"/>
<dbReference type="InParanoid" id="Q22398"/>
<dbReference type="OMA" id="INKYYEC"/>
<dbReference type="OrthoDB" id="291007at2759"/>
<dbReference type="PhylomeDB" id="Q22398"/>
<dbReference type="PRO" id="PR:Q22398"/>
<dbReference type="Proteomes" id="UP000001940">
    <property type="component" value="Chromosome V"/>
</dbReference>
<dbReference type="Bgee" id="WBGene00003541">
    <property type="expression patterns" value="Expressed in adult organism and 1 other cell type or tissue"/>
</dbReference>
<dbReference type="GO" id="GO:0005576">
    <property type="term" value="C:extracellular region"/>
    <property type="evidence" value="ECO:0007669"/>
    <property type="project" value="UniProtKB-SubCell"/>
</dbReference>
<dbReference type="GO" id="GO:0004222">
    <property type="term" value="F:metalloendopeptidase activity"/>
    <property type="evidence" value="ECO:0000318"/>
    <property type="project" value="GO_Central"/>
</dbReference>
<dbReference type="GO" id="GO:0008270">
    <property type="term" value="F:zinc ion binding"/>
    <property type="evidence" value="ECO:0007669"/>
    <property type="project" value="InterPro"/>
</dbReference>
<dbReference type="GO" id="GO:0018996">
    <property type="term" value="P:molting cycle, collagen and cuticulin-based cuticle"/>
    <property type="evidence" value="ECO:0007669"/>
    <property type="project" value="InterPro"/>
</dbReference>
<dbReference type="GO" id="GO:0006508">
    <property type="term" value="P:proteolysis"/>
    <property type="evidence" value="ECO:0007669"/>
    <property type="project" value="UniProtKB-KW"/>
</dbReference>
<dbReference type="FunFam" id="3.40.390.10:FF:000071">
    <property type="entry name" value="Zinc metalloproteinase"/>
    <property type="match status" value="1"/>
</dbReference>
<dbReference type="Gene3D" id="3.40.390.10">
    <property type="entry name" value="Collagenase (Catalytic Domain)"/>
    <property type="match status" value="1"/>
</dbReference>
<dbReference type="InterPro" id="IPR000742">
    <property type="entry name" value="EGF-like_dom"/>
</dbReference>
<dbReference type="InterPro" id="IPR024079">
    <property type="entry name" value="MetalloPept_cat_dom_sf"/>
</dbReference>
<dbReference type="InterPro" id="IPR017050">
    <property type="entry name" value="Metallopeptidase_nem"/>
</dbReference>
<dbReference type="InterPro" id="IPR001506">
    <property type="entry name" value="Peptidase_M12A"/>
</dbReference>
<dbReference type="InterPro" id="IPR006026">
    <property type="entry name" value="Peptidase_Metallo"/>
</dbReference>
<dbReference type="PANTHER" id="PTHR10127">
    <property type="entry name" value="DISCOIDIN, CUB, EGF, LAMININ , AND ZINC METALLOPROTEASE DOMAIN CONTAINING"/>
    <property type="match status" value="1"/>
</dbReference>
<dbReference type="PANTHER" id="PTHR10127:SF794">
    <property type="entry name" value="ZINC METALLOPROTEINASE NAS-22-RELATED"/>
    <property type="match status" value="1"/>
</dbReference>
<dbReference type="Pfam" id="PF01400">
    <property type="entry name" value="Astacin"/>
    <property type="match status" value="1"/>
</dbReference>
<dbReference type="PIRSF" id="PIRSF036365">
    <property type="entry name" value="Astacin_nematoda"/>
    <property type="match status" value="1"/>
</dbReference>
<dbReference type="PRINTS" id="PR00480">
    <property type="entry name" value="ASTACIN"/>
</dbReference>
<dbReference type="SMART" id="SM00235">
    <property type="entry name" value="ZnMc"/>
    <property type="match status" value="1"/>
</dbReference>
<dbReference type="SUPFAM" id="SSF55486">
    <property type="entry name" value="Metalloproteases ('zincins'), catalytic domain"/>
    <property type="match status" value="1"/>
</dbReference>
<dbReference type="PROSITE" id="PS51864">
    <property type="entry name" value="ASTACIN"/>
    <property type="match status" value="1"/>
</dbReference>
<dbReference type="PROSITE" id="PS00022">
    <property type="entry name" value="EGF_1"/>
    <property type="match status" value="1"/>
</dbReference>
<dbReference type="PROSITE" id="PS01186">
    <property type="entry name" value="EGF_2"/>
    <property type="match status" value="1"/>
</dbReference>
<dbReference type="PROSITE" id="PS00142">
    <property type="entry name" value="ZINC_PROTEASE"/>
    <property type="match status" value="1"/>
</dbReference>
<sequence length="367" mass="42514">MKSFFILLSILQECYGKDIVARIGGRNVAEKIGGARHRRQVLIRGSDEERRHKWFNNTVHYYFYEENFDFTVKESILRAMELISNHTCIKFSTEPSEKSIRMESDSTTIACYAEIGQVRENQLFSFNSDCYSAGVAVHELIHSLGFIHAHQRSDRDQYLEFKKNLDELNQTYQEQYKIWEYQEILVPYDVGSVMQYPNEEDEEYYPVRKYRTMANTMGSAIVAFYDYLMINKYYECSCANNLSCKNHGYPNPSNCSQCNCPYGFGGADCSQRAEPGATFQATETWQNVTISLDAGYRYLENNQKLPQVDFIYQFLWIMAPANKTTQIRVEKFVEGKCLPGCIRGGVEIKTNEDPRLTSPRLCCEETS</sequence>
<organism>
    <name type="scientific">Caenorhabditis elegans</name>
    <dbReference type="NCBI Taxonomy" id="6239"/>
    <lineage>
        <taxon>Eukaryota</taxon>
        <taxon>Metazoa</taxon>
        <taxon>Ecdysozoa</taxon>
        <taxon>Nematoda</taxon>
        <taxon>Chromadorea</taxon>
        <taxon>Rhabditida</taxon>
        <taxon>Rhabditina</taxon>
        <taxon>Rhabditomorpha</taxon>
        <taxon>Rhabditoidea</taxon>
        <taxon>Rhabditidae</taxon>
        <taxon>Peloderinae</taxon>
        <taxon>Caenorhabditis</taxon>
    </lineage>
</organism>
<name>NAS22_CAEEL</name>
<accession>Q22398</accession>
<accession>Q70MS9</accession>
<keyword id="KW-1015">Disulfide bond</keyword>
<keyword id="KW-0245">EGF-like domain</keyword>
<keyword id="KW-0325">Glycoprotein</keyword>
<keyword id="KW-0378">Hydrolase</keyword>
<keyword id="KW-0479">Metal-binding</keyword>
<keyword id="KW-0482">Metalloprotease</keyword>
<keyword id="KW-0645">Protease</keyword>
<keyword id="KW-1185">Reference proteome</keyword>
<keyword id="KW-0964">Secreted</keyword>
<keyword id="KW-0732">Signal</keyword>
<keyword id="KW-0862">Zinc</keyword>
<keyword id="KW-0865">Zymogen</keyword>